<name>PLSX_BURA4</name>
<organism>
    <name type="scientific">Burkholderia ambifaria (strain MC40-6)</name>
    <dbReference type="NCBI Taxonomy" id="398577"/>
    <lineage>
        <taxon>Bacteria</taxon>
        <taxon>Pseudomonadati</taxon>
        <taxon>Pseudomonadota</taxon>
        <taxon>Betaproteobacteria</taxon>
        <taxon>Burkholderiales</taxon>
        <taxon>Burkholderiaceae</taxon>
        <taxon>Burkholderia</taxon>
        <taxon>Burkholderia cepacia complex</taxon>
    </lineage>
</organism>
<dbReference type="EC" id="2.3.1.274" evidence="1"/>
<dbReference type="EMBL" id="CP001025">
    <property type="protein sequence ID" value="ACB63491.1"/>
    <property type="molecule type" value="Genomic_DNA"/>
</dbReference>
<dbReference type="RefSeq" id="WP_011656342.1">
    <property type="nucleotide sequence ID" value="NC_010551.1"/>
</dbReference>
<dbReference type="SMR" id="B1YVL0"/>
<dbReference type="GeneID" id="93083595"/>
<dbReference type="KEGG" id="bac:BamMC406_1000"/>
<dbReference type="HOGENOM" id="CLU_039379_1_0_4"/>
<dbReference type="OrthoDB" id="9806408at2"/>
<dbReference type="UniPathway" id="UPA00085"/>
<dbReference type="Proteomes" id="UP000001680">
    <property type="component" value="Chromosome 1"/>
</dbReference>
<dbReference type="GO" id="GO:0005737">
    <property type="term" value="C:cytoplasm"/>
    <property type="evidence" value="ECO:0007669"/>
    <property type="project" value="UniProtKB-SubCell"/>
</dbReference>
<dbReference type="GO" id="GO:0043811">
    <property type="term" value="F:phosphate:acyl-[acyl carrier protein] acyltransferase activity"/>
    <property type="evidence" value="ECO:0007669"/>
    <property type="project" value="UniProtKB-UniRule"/>
</dbReference>
<dbReference type="GO" id="GO:0006633">
    <property type="term" value="P:fatty acid biosynthetic process"/>
    <property type="evidence" value="ECO:0007669"/>
    <property type="project" value="UniProtKB-UniRule"/>
</dbReference>
<dbReference type="GO" id="GO:0008654">
    <property type="term" value="P:phospholipid biosynthetic process"/>
    <property type="evidence" value="ECO:0007669"/>
    <property type="project" value="UniProtKB-KW"/>
</dbReference>
<dbReference type="Gene3D" id="3.40.718.10">
    <property type="entry name" value="Isopropylmalate Dehydrogenase"/>
    <property type="match status" value="1"/>
</dbReference>
<dbReference type="HAMAP" id="MF_00019">
    <property type="entry name" value="PlsX"/>
    <property type="match status" value="1"/>
</dbReference>
<dbReference type="InterPro" id="IPR003664">
    <property type="entry name" value="FA_synthesis"/>
</dbReference>
<dbReference type="InterPro" id="IPR012281">
    <property type="entry name" value="Phospholipid_synth_PlsX-like"/>
</dbReference>
<dbReference type="NCBIfam" id="TIGR00182">
    <property type="entry name" value="plsX"/>
    <property type="match status" value="1"/>
</dbReference>
<dbReference type="PANTHER" id="PTHR30100">
    <property type="entry name" value="FATTY ACID/PHOSPHOLIPID SYNTHESIS PROTEIN PLSX"/>
    <property type="match status" value="1"/>
</dbReference>
<dbReference type="PANTHER" id="PTHR30100:SF1">
    <property type="entry name" value="PHOSPHATE ACYLTRANSFERASE"/>
    <property type="match status" value="1"/>
</dbReference>
<dbReference type="Pfam" id="PF02504">
    <property type="entry name" value="FA_synthesis"/>
    <property type="match status" value="1"/>
</dbReference>
<dbReference type="PIRSF" id="PIRSF002465">
    <property type="entry name" value="Phsphlp_syn_PlsX"/>
    <property type="match status" value="1"/>
</dbReference>
<dbReference type="SUPFAM" id="SSF53659">
    <property type="entry name" value="Isocitrate/Isopropylmalate dehydrogenase-like"/>
    <property type="match status" value="1"/>
</dbReference>
<gene>
    <name evidence="1" type="primary">plsX</name>
    <name type="ordered locus">BamMC406_1000</name>
</gene>
<accession>B1YVL0</accession>
<reference key="1">
    <citation type="submission" date="2008-04" db="EMBL/GenBank/DDBJ databases">
        <title>Complete sequence of chromosome 1 of Burkholderia ambifaria MC40-6.</title>
        <authorList>
            <person name="Copeland A."/>
            <person name="Lucas S."/>
            <person name="Lapidus A."/>
            <person name="Glavina del Rio T."/>
            <person name="Dalin E."/>
            <person name="Tice H."/>
            <person name="Pitluck S."/>
            <person name="Chain P."/>
            <person name="Malfatti S."/>
            <person name="Shin M."/>
            <person name="Vergez L."/>
            <person name="Lang D."/>
            <person name="Schmutz J."/>
            <person name="Larimer F."/>
            <person name="Land M."/>
            <person name="Hauser L."/>
            <person name="Kyrpides N."/>
            <person name="Lykidis A."/>
            <person name="Ramette A."/>
            <person name="Konstantinidis K."/>
            <person name="Tiedje J."/>
            <person name="Richardson P."/>
        </authorList>
    </citation>
    <scope>NUCLEOTIDE SEQUENCE [LARGE SCALE GENOMIC DNA]</scope>
    <source>
        <strain>MC40-6</strain>
    </source>
</reference>
<keyword id="KW-0963">Cytoplasm</keyword>
<keyword id="KW-0444">Lipid biosynthesis</keyword>
<keyword id="KW-0443">Lipid metabolism</keyword>
<keyword id="KW-0594">Phospholipid biosynthesis</keyword>
<keyword id="KW-1208">Phospholipid metabolism</keyword>
<keyword id="KW-0808">Transferase</keyword>
<proteinExistence type="inferred from homology"/>
<sequence length="368" mass="38890">MTVKLTIDCMGGDHGPSVTVPAAVKFVRAHPDAHLMLVGIESAIRAQLKKLKALDDPALTIVPATEVVAMDDPVEVALRKKKDSSMRVALNQVKEGAAQACISAGNTGALMAVSRYVLKTLPGIERPAIAFALPNPTGYTMMLDLGANVDCEPQHLLQFAEMGHALVAALEGKERPTIGLLNIGEEVIKGNETIKRAGELLRASTLNFRGNVEGNDIYKGTVDVIVCDGFVGNVALKTSEGLAQMLSDIIREEFGRSLMSKLMALLALPVLMRFKKRVDHRQYNGAALLGLKGLVIKSHGSADAYAFEWAIKRGYDAVKNGVLERLARAMADNSVSLGDGGHDAGGAGTASPAPGHHAEPSAAQSSKA</sequence>
<evidence type="ECO:0000255" key="1">
    <source>
        <dbReference type="HAMAP-Rule" id="MF_00019"/>
    </source>
</evidence>
<evidence type="ECO:0000256" key="2">
    <source>
        <dbReference type="SAM" id="MobiDB-lite"/>
    </source>
</evidence>
<comment type="function">
    <text evidence="1">Catalyzes the reversible formation of acyl-phosphate (acyl-PO(4)) from acyl-[acyl-carrier-protein] (acyl-ACP). This enzyme utilizes acyl-ACP as fatty acyl donor, but not acyl-CoA.</text>
</comment>
<comment type="catalytic activity">
    <reaction evidence="1">
        <text>a fatty acyl-[ACP] + phosphate = an acyl phosphate + holo-[ACP]</text>
        <dbReference type="Rhea" id="RHEA:42292"/>
        <dbReference type="Rhea" id="RHEA-COMP:9685"/>
        <dbReference type="Rhea" id="RHEA-COMP:14125"/>
        <dbReference type="ChEBI" id="CHEBI:43474"/>
        <dbReference type="ChEBI" id="CHEBI:59918"/>
        <dbReference type="ChEBI" id="CHEBI:64479"/>
        <dbReference type="ChEBI" id="CHEBI:138651"/>
        <dbReference type="EC" id="2.3.1.274"/>
    </reaction>
</comment>
<comment type="pathway">
    <text evidence="1">Lipid metabolism; phospholipid metabolism.</text>
</comment>
<comment type="subunit">
    <text evidence="1">Homodimer. Probably interacts with PlsY.</text>
</comment>
<comment type="subcellular location">
    <subcellularLocation>
        <location evidence="1">Cytoplasm</location>
    </subcellularLocation>
    <text evidence="1">Associated with the membrane possibly through PlsY.</text>
</comment>
<comment type="similarity">
    <text evidence="1">Belongs to the PlsX family.</text>
</comment>
<feature type="chain" id="PRO_1000089882" description="Phosphate acyltransferase">
    <location>
        <begin position="1"/>
        <end position="368"/>
    </location>
</feature>
<feature type="region of interest" description="Disordered" evidence="2">
    <location>
        <begin position="338"/>
        <end position="368"/>
    </location>
</feature>
<protein>
    <recommendedName>
        <fullName evidence="1">Phosphate acyltransferase</fullName>
        <ecNumber evidence="1">2.3.1.274</ecNumber>
    </recommendedName>
    <alternativeName>
        <fullName evidence="1">Acyl-ACP phosphotransacylase</fullName>
    </alternativeName>
    <alternativeName>
        <fullName evidence="1">Acyl-[acyl-carrier-protein]--phosphate acyltransferase</fullName>
    </alternativeName>
    <alternativeName>
        <fullName evidence="1">Phosphate-acyl-ACP acyltransferase</fullName>
    </alternativeName>
</protein>